<proteinExistence type="evidence at protein level"/>
<organism>
    <name type="scientific">Aspergillus rugulosus</name>
    <name type="common">Emericella rugulosa</name>
    <dbReference type="NCBI Taxonomy" id="41736"/>
    <lineage>
        <taxon>Eukaryota</taxon>
        <taxon>Fungi</taxon>
        <taxon>Dikarya</taxon>
        <taxon>Ascomycota</taxon>
        <taxon>Pezizomycotina</taxon>
        <taxon>Eurotiomycetes</taxon>
        <taxon>Eurotiomycetidae</taxon>
        <taxon>Eurotiales</taxon>
        <taxon>Aspergillaceae</taxon>
        <taxon>Aspergillus</taxon>
        <taxon>Aspergillus subgen. Nidulantes</taxon>
    </lineage>
</organism>
<comment type="function">
    <text evidence="2">2-oxoglutarate-dependent dioxygenase; part of the gene cluster that mediates the biosynthesis of echinocandin B, a fungal lipidated cyclic hexapeptide that acts as an antifungal agent (PubMed:22998630). Linoleoyl-AMP, produced by the fatty-acyl-AMP ligase ecdI, is transferred to the initiation carrier domain (T0) of ecdA (PubMed:22998630). The linoleoyl-S-phosphopantetheinyl-T0 is sequentially extended with L-ornithine, L-threonine, L-proline, L-homotyrosine, L-threonine, and 4R-methyl-L-proline to form the linear hexapeptide (PubMed:22998630). Thereafter, the terminal condensation (C7) performs macrocyclization of the NRPS product and the cyclic scaffold is released from ecdA (PubMed:22998630). All six of the amino acid residues are hydroxylated, including 4R,5R-dihydroxy-L-ornithine, 4R-hydroxyl-L-proline, 3S,4S-dihydroxy-L-homotyrosine, and 3S-hydroxyl-4S-methyl-L-prolin (PubMed:22998630). In the pathway, all the hydroxylation reactions are proposed to occur following completion of the cyclic peptide, so the unhydroxylated precursor produced by ecdA will undergo six rounds of hydroxylation (PubMed:22998630). Five hydroxylase genes (ecdG, ecdH, ecdK, htyE and htyF) are embedded within the echinocandin B (ecd) and L-homotyrosine (hty) clusters (PubMed:22998630).</text>
</comment>
<comment type="cofactor">
    <cofactor evidence="1">
        <name>Fe(2+)</name>
        <dbReference type="ChEBI" id="CHEBI:29033"/>
    </cofactor>
    <text evidence="1">Binds 1 Fe(2+) ion per subunit.</text>
</comment>
<comment type="pathway">
    <text evidence="5">Antifungal biosynthesis.</text>
</comment>
<comment type="biotechnology">
    <text evidence="2">Due to their effectiveness as antifungal agents, echinocandin derivatives can be used for the treatment of human invasive candidiasis (PubMed:22998630).</text>
</comment>
<comment type="similarity">
    <text evidence="4">Belongs to the iron/ascorbate-dependent oxidoreductase family.</text>
</comment>
<evidence type="ECO:0000255" key="1">
    <source>
        <dbReference type="PROSITE-ProRule" id="PRU00805"/>
    </source>
</evidence>
<evidence type="ECO:0000269" key="2">
    <source>
    </source>
</evidence>
<evidence type="ECO:0000303" key="3">
    <source>
    </source>
</evidence>
<evidence type="ECO:0000305" key="4"/>
<evidence type="ECO:0000305" key="5">
    <source>
    </source>
</evidence>
<feature type="chain" id="PRO_0000443830" description="2-oxoglutarate-dependent dioxygenase ecdG">
    <location>
        <begin position="1"/>
        <end position="338"/>
    </location>
</feature>
<feature type="domain" description="Fe2OG dioxygenase" evidence="1">
    <location>
        <begin position="165"/>
        <end position="273"/>
    </location>
</feature>
<feature type="binding site" evidence="1">
    <location>
        <position position="190"/>
    </location>
    <ligand>
        <name>Fe cation</name>
        <dbReference type="ChEBI" id="CHEBI:24875"/>
    </ligand>
</feature>
<feature type="binding site" evidence="1">
    <location>
        <position position="192"/>
    </location>
    <ligand>
        <name>Fe cation</name>
        <dbReference type="ChEBI" id="CHEBI:24875"/>
    </ligand>
</feature>
<feature type="binding site" evidence="1">
    <location>
        <position position="249"/>
    </location>
    <ligand>
        <name>Fe cation</name>
        <dbReference type="ChEBI" id="CHEBI:24875"/>
    </ligand>
</feature>
<feature type="binding site" evidence="1">
    <location>
        <position position="264"/>
    </location>
    <ligand>
        <name>2-oxoglutarate</name>
        <dbReference type="ChEBI" id="CHEBI:16810"/>
    </ligand>
</feature>
<accession>K0E678</accession>
<protein>
    <recommendedName>
        <fullName evidence="3">2-oxoglutarate-dependent dioxygenase ecdG</fullName>
        <ecNumber evidence="5">1.14.-.-</ecNumber>
    </recommendedName>
    <alternativeName>
        <fullName evidence="3">Echinocandin B biosynthetic cluster protein G</fullName>
    </alternativeName>
</protein>
<keyword id="KW-0408">Iron</keyword>
<keyword id="KW-0479">Metal-binding</keyword>
<keyword id="KW-0560">Oxidoreductase</keyword>
<name>ECDG_ASPRU</name>
<sequence>MASISYDGLLRGAAKDIQTLTEASLVHGYFNLELDCPEGKQLREDVLFLESFTKEIFDTPSPQKTIYDFKKLGRFRTTGFKPLGIEEGAKGKSDGFEMFMLPQNELLLPSHQDKLQSPSAVFSHRATLTRCMSNYDAASQLILRRITESLNLDNALLAAHNPSEPSVTNLGFLRYPPQPATSENCGHIAHTDVGTLTILAATQRGLQVINSETQDWTFVDPHPQNEFLLVQFGDCLKFLSGGRVVPSIHRVIPSDNPEEREGTKYTLAYFVRPNEEAVIKDDRGEEWVYGDYHCRKFGAFARPLKEGDRDRMPDRPVGEYDMINIRKFKGLADGVSAA</sequence>
<dbReference type="EC" id="1.14.-.-" evidence="5"/>
<dbReference type="EMBL" id="JX421684">
    <property type="protein sequence ID" value="AFT91379.1"/>
    <property type="molecule type" value="Genomic_DNA"/>
</dbReference>
<dbReference type="SMR" id="K0E678"/>
<dbReference type="BioCyc" id="MetaCyc:MONOMER-19238"/>
<dbReference type="GO" id="GO:0046872">
    <property type="term" value="F:metal ion binding"/>
    <property type="evidence" value="ECO:0007669"/>
    <property type="project" value="UniProtKB-KW"/>
</dbReference>
<dbReference type="GO" id="GO:0016491">
    <property type="term" value="F:oxidoreductase activity"/>
    <property type="evidence" value="ECO:0007669"/>
    <property type="project" value="UniProtKB-KW"/>
</dbReference>
<dbReference type="Gene3D" id="2.60.120.330">
    <property type="entry name" value="B-lactam Antibiotic, Isopenicillin N Synthase, Chain"/>
    <property type="match status" value="1"/>
</dbReference>
<dbReference type="InterPro" id="IPR044861">
    <property type="entry name" value="IPNS-like_FE2OG_OXY"/>
</dbReference>
<dbReference type="InterPro" id="IPR027443">
    <property type="entry name" value="IPNS-like_sf"/>
</dbReference>
<dbReference type="InterPro" id="IPR050231">
    <property type="entry name" value="Iron_ascorbate_oxido_reductase"/>
</dbReference>
<dbReference type="InterPro" id="IPR005123">
    <property type="entry name" value="Oxoglu/Fe-dep_dioxygenase_dom"/>
</dbReference>
<dbReference type="PANTHER" id="PTHR47990">
    <property type="entry name" value="2-OXOGLUTARATE (2OG) AND FE(II)-DEPENDENT OXYGENASE SUPERFAMILY PROTEIN-RELATED"/>
    <property type="match status" value="1"/>
</dbReference>
<dbReference type="Pfam" id="PF03171">
    <property type="entry name" value="2OG-FeII_Oxy"/>
    <property type="match status" value="1"/>
</dbReference>
<dbReference type="SUPFAM" id="SSF51197">
    <property type="entry name" value="Clavaminate synthase-like"/>
    <property type="match status" value="1"/>
</dbReference>
<dbReference type="PROSITE" id="PS51471">
    <property type="entry name" value="FE2OG_OXY"/>
    <property type="match status" value="1"/>
</dbReference>
<reference key="1">
    <citation type="journal article" date="2012" name="J. Am. Chem. Soc.">
        <title>Identification and characterization of the echinocandin B biosynthetic gene cluster from Emericella rugulosa NRRL 11440.</title>
        <authorList>
            <person name="Cacho R.A."/>
            <person name="Jiang W."/>
            <person name="Chooi Y.H."/>
            <person name="Walsh C.T."/>
            <person name="Tang Y."/>
        </authorList>
    </citation>
    <scope>NUCLEOTIDE SEQUENCE [GENOMIC DNA]</scope>
    <scope>FUNCTION</scope>
    <scope>PATHWAY</scope>
    <scope>BIOTECHNOLOGY</scope>
    <source>
        <strain>ATCC 58397 / NRRL 11440</strain>
    </source>
</reference>
<gene>
    <name evidence="3" type="primary">ecdG</name>
</gene>